<keyword id="KW-0131">Cell cycle</keyword>
<keyword id="KW-0132">Cell division</keyword>
<keyword id="KW-0159">Chromosome partition</keyword>
<keyword id="KW-0963">Cytoplasm</keyword>
<keyword id="KW-0229">DNA integration</keyword>
<keyword id="KW-0233">DNA recombination</keyword>
<keyword id="KW-0238">DNA-binding</keyword>
<feature type="chain" id="PRO_1000216003" description="Tyrosine recombinase XerS">
    <location>
        <begin position="1"/>
        <end position="356"/>
    </location>
</feature>
<feature type="domain" description="Core-binding (CB)" evidence="3">
    <location>
        <begin position="16"/>
        <end position="121"/>
    </location>
</feature>
<feature type="domain" description="Tyr recombinase" evidence="2">
    <location>
        <begin position="169"/>
        <end position="354"/>
    </location>
</feature>
<feature type="active site" evidence="1">
    <location>
        <position position="210"/>
    </location>
</feature>
<feature type="active site" evidence="1">
    <location>
        <position position="234"/>
    </location>
</feature>
<feature type="active site" evidence="1">
    <location>
        <position position="306"/>
    </location>
</feature>
<feature type="active site" evidence="1">
    <location>
        <position position="309"/>
    </location>
</feature>
<feature type="active site" evidence="1">
    <location>
        <position position="332"/>
    </location>
</feature>
<feature type="active site" description="O-(3'-phospho-DNA)-tyrosine intermediate" evidence="1">
    <location>
        <position position="341"/>
    </location>
</feature>
<reference key="1">
    <citation type="journal article" date="2009" name="PLoS Pathog.">
        <title>Genomic evidence for the evolution of Streptococcus equi: host restriction, increased virulence, and genetic exchange with human pathogens.</title>
        <authorList>
            <person name="Holden M.T.G."/>
            <person name="Heather Z."/>
            <person name="Paillot R."/>
            <person name="Steward K.F."/>
            <person name="Webb K."/>
            <person name="Ainslie F."/>
            <person name="Jourdan T."/>
            <person name="Bason N.C."/>
            <person name="Holroyd N.E."/>
            <person name="Mungall K."/>
            <person name="Quail M.A."/>
            <person name="Sanders M."/>
            <person name="Simmonds M."/>
            <person name="Willey D."/>
            <person name="Brooks K."/>
            <person name="Aanensen D.M."/>
            <person name="Spratt B.G."/>
            <person name="Jolley K.A."/>
            <person name="Maiden M.C.J."/>
            <person name="Kehoe M."/>
            <person name="Chanter N."/>
            <person name="Bentley S.D."/>
            <person name="Robinson C."/>
            <person name="Maskell D.J."/>
            <person name="Parkhill J."/>
            <person name="Waller A.S."/>
        </authorList>
    </citation>
    <scope>NUCLEOTIDE SEQUENCE [LARGE SCALE GENOMIC DNA]</scope>
    <source>
        <strain>H70</strain>
    </source>
</reference>
<organism>
    <name type="scientific">Streptococcus equi subsp. zooepidemicus (strain H70)</name>
    <dbReference type="NCBI Taxonomy" id="553483"/>
    <lineage>
        <taxon>Bacteria</taxon>
        <taxon>Bacillati</taxon>
        <taxon>Bacillota</taxon>
        <taxon>Bacilli</taxon>
        <taxon>Lactobacillales</taxon>
        <taxon>Streptococcaceae</taxon>
        <taxon>Streptococcus</taxon>
    </lineage>
</organism>
<proteinExistence type="inferred from homology"/>
<sequence>MKRDLLLTKIEEYKNIMPWYVLDYYQSKLSVPYSFTTLYEYLKEYKRFFEWLIDSDLSKAARIADVDLTTLEHLSKKDMEAFILYLRERPSLNTYSTKKGVSQTTINRTLSALSSLYKYLTEEVENEHGEPYFYRNVMKKVATKKKRETLAARAENIKQKLFLGDETMAFLDYVDKEYEHKLSNRAKASFRKNKERDLAIIALLLASGIRLSEAVNLDLKDVNLNMMLVEVTRKGGKRDSVNVAAFAKPHLEAYLSVRKDRYQAEKQDVAFFLTAYRGLPNRIDASSIEKMVGKYSESFKIRVTPHKLRHTLATRLYDTTKSQVLVSHQLGHASTQVTDLYTHIVNDEQKNALDKL</sequence>
<protein>
    <recommendedName>
        <fullName evidence="1">Tyrosine recombinase XerS</fullName>
    </recommendedName>
</protein>
<comment type="function">
    <text evidence="1">Site-specific tyrosine recombinase, which acts by catalyzing the cutting and rejoining of the recombining DNA molecules. Essential to convert dimers of the bacterial chromosome into monomers to permit their segregation at cell division.</text>
</comment>
<comment type="activity regulation">
    <text evidence="1">FtsK is required for recombination.</text>
</comment>
<comment type="subcellular location">
    <subcellularLocation>
        <location evidence="1">Cytoplasm</location>
    </subcellularLocation>
</comment>
<comment type="similarity">
    <text evidence="1">Belongs to the 'phage' integrase family. XerS subfamily.</text>
</comment>
<gene>
    <name evidence="1" type="primary">xerS</name>
    <name type="ordered locus">SZO_09660</name>
</gene>
<dbReference type="EMBL" id="FM204884">
    <property type="protein sequence ID" value="CAW99258.1"/>
    <property type="molecule type" value="Genomic_DNA"/>
</dbReference>
<dbReference type="SMR" id="C0MFD9"/>
<dbReference type="KEGG" id="seq:SZO_09660"/>
<dbReference type="eggNOG" id="COG4974">
    <property type="taxonomic scope" value="Bacteria"/>
</dbReference>
<dbReference type="HOGENOM" id="CLU_027562_9_6_9"/>
<dbReference type="Proteomes" id="UP000001368">
    <property type="component" value="Chromosome"/>
</dbReference>
<dbReference type="GO" id="GO:0005737">
    <property type="term" value="C:cytoplasm"/>
    <property type="evidence" value="ECO:0007669"/>
    <property type="project" value="UniProtKB-SubCell"/>
</dbReference>
<dbReference type="GO" id="GO:0003677">
    <property type="term" value="F:DNA binding"/>
    <property type="evidence" value="ECO:0007669"/>
    <property type="project" value="UniProtKB-KW"/>
</dbReference>
<dbReference type="GO" id="GO:0009037">
    <property type="term" value="F:tyrosine-based site-specific recombinase activity"/>
    <property type="evidence" value="ECO:0007669"/>
    <property type="project" value="UniProtKB-UniRule"/>
</dbReference>
<dbReference type="GO" id="GO:0051301">
    <property type="term" value="P:cell division"/>
    <property type="evidence" value="ECO:0007669"/>
    <property type="project" value="UniProtKB-KW"/>
</dbReference>
<dbReference type="GO" id="GO:0007059">
    <property type="term" value="P:chromosome segregation"/>
    <property type="evidence" value="ECO:0007669"/>
    <property type="project" value="UniProtKB-UniRule"/>
</dbReference>
<dbReference type="GO" id="GO:0006310">
    <property type="term" value="P:DNA recombination"/>
    <property type="evidence" value="ECO:0007669"/>
    <property type="project" value="UniProtKB-UniRule"/>
</dbReference>
<dbReference type="CDD" id="cd00397">
    <property type="entry name" value="DNA_BRE_C"/>
    <property type="match status" value="1"/>
</dbReference>
<dbReference type="Gene3D" id="1.10.150.130">
    <property type="match status" value="1"/>
</dbReference>
<dbReference type="Gene3D" id="1.10.443.10">
    <property type="entry name" value="Intergrase catalytic core"/>
    <property type="match status" value="1"/>
</dbReference>
<dbReference type="HAMAP" id="MF_01816">
    <property type="entry name" value="Recomb_XerS"/>
    <property type="match status" value="1"/>
</dbReference>
<dbReference type="InterPro" id="IPR044068">
    <property type="entry name" value="CB"/>
</dbReference>
<dbReference type="InterPro" id="IPR011010">
    <property type="entry name" value="DNA_brk_join_enz"/>
</dbReference>
<dbReference type="InterPro" id="IPR013762">
    <property type="entry name" value="Integrase-like_cat_sf"/>
</dbReference>
<dbReference type="InterPro" id="IPR002104">
    <property type="entry name" value="Integrase_catalytic"/>
</dbReference>
<dbReference type="InterPro" id="IPR010998">
    <property type="entry name" value="Integrase_recombinase_N"/>
</dbReference>
<dbReference type="InterPro" id="IPR004107">
    <property type="entry name" value="Integrase_SAM-like_N"/>
</dbReference>
<dbReference type="InterPro" id="IPR023670">
    <property type="entry name" value="Recomb_XerS"/>
</dbReference>
<dbReference type="InterPro" id="IPR050090">
    <property type="entry name" value="Tyrosine_recombinase_XerCD"/>
</dbReference>
<dbReference type="NCBIfam" id="NF003462">
    <property type="entry name" value="PRK05084.1"/>
    <property type="match status" value="1"/>
</dbReference>
<dbReference type="PANTHER" id="PTHR30349">
    <property type="entry name" value="PHAGE INTEGRASE-RELATED"/>
    <property type="match status" value="1"/>
</dbReference>
<dbReference type="PANTHER" id="PTHR30349:SF77">
    <property type="entry name" value="TYROSINE RECOMBINASE XERC"/>
    <property type="match status" value="1"/>
</dbReference>
<dbReference type="Pfam" id="PF02899">
    <property type="entry name" value="Phage_int_SAM_1"/>
    <property type="match status" value="1"/>
</dbReference>
<dbReference type="Pfam" id="PF00589">
    <property type="entry name" value="Phage_integrase"/>
    <property type="match status" value="1"/>
</dbReference>
<dbReference type="SUPFAM" id="SSF56349">
    <property type="entry name" value="DNA breaking-rejoining enzymes"/>
    <property type="match status" value="1"/>
</dbReference>
<dbReference type="PROSITE" id="PS51900">
    <property type="entry name" value="CB"/>
    <property type="match status" value="1"/>
</dbReference>
<dbReference type="PROSITE" id="PS51898">
    <property type="entry name" value="TYR_RECOMBINASE"/>
    <property type="match status" value="1"/>
</dbReference>
<accession>C0MFD9</accession>
<name>XERS_STRS7</name>
<evidence type="ECO:0000255" key="1">
    <source>
        <dbReference type="HAMAP-Rule" id="MF_01816"/>
    </source>
</evidence>
<evidence type="ECO:0000255" key="2">
    <source>
        <dbReference type="PROSITE-ProRule" id="PRU01246"/>
    </source>
</evidence>
<evidence type="ECO:0000255" key="3">
    <source>
        <dbReference type="PROSITE-ProRule" id="PRU01248"/>
    </source>
</evidence>